<name>ILVC_BRASO</name>
<protein>
    <recommendedName>
        <fullName evidence="1">Ketol-acid reductoisomerase (NADP(+))</fullName>
        <shortName evidence="1">KARI</shortName>
        <ecNumber evidence="1">1.1.1.86</ecNumber>
    </recommendedName>
    <alternativeName>
        <fullName evidence="1">Acetohydroxy-acid isomeroreductase</fullName>
        <shortName evidence="1">AHIR</shortName>
    </alternativeName>
    <alternativeName>
        <fullName evidence="1">Alpha-keto-beta-hydroxylacyl reductoisomerase</fullName>
    </alternativeName>
    <alternativeName>
        <fullName evidence="1">Ketol-acid reductoisomerase type 1</fullName>
    </alternativeName>
    <alternativeName>
        <fullName evidence="1">Ketol-acid reductoisomerase type I</fullName>
    </alternativeName>
</protein>
<sequence>MRVYYDRDADLNLIKGKKVVIVGYGSQGHAHALNLKDSGVKDVAIALRKGSASAKKAEGAGFKVMEVAEAAKWADLVMMLTPDELQGDIYREHLHDNMKQGAALVFAHGLNVHFNLLDPRADLDVLMIAPKGPGHTVRSEYQRGGGVPCLIAIAKDSSGNAHDLGLSYASAIGGGRAGIIETTFKEECETDLFGEQAVLCGGLVELIKAGYETLTEAGYAPEMAYFECLHEVKLIVDLIYEGGIANMNYSISNTAEYGEYVTGPRIITPETKAEMKRVLDDIQSGRFARDWMLENKVNQSSFKATRARLSQHPIEEVGARLRDMMPWIKKGALVDKSKN</sequence>
<reference key="1">
    <citation type="journal article" date="2007" name="Science">
        <title>Legumes symbioses: absence of nod genes in photosynthetic bradyrhizobia.</title>
        <authorList>
            <person name="Giraud E."/>
            <person name="Moulin L."/>
            <person name="Vallenet D."/>
            <person name="Barbe V."/>
            <person name="Cytryn E."/>
            <person name="Avarre J.-C."/>
            <person name="Jaubert M."/>
            <person name="Simon D."/>
            <person name="Cartieaux F."/>
            <person name="Prin Y."/>
            <person name="Bena G."/>
            <person name="Hannibal L."/>
            <person name="Fardoux J."/>
            <person name="Kojadinovic M."/>
            <person name="Vuillet L."/>
            <person name="Lajus A."/>
            <person name="Cruveiller S."/>
            <person name="Rouy Z."/>
            <person name="Mangenot S."/>
            <person name="Segurens B."/>
            <person name="Dossat C."/>
            <person name="Franck W.L."/>
            <person name="Chang W.-S."/>
            <person name="Saunders E."/>
            <person name="Bruce D."/>
            <person name="Richardson P."/>
            <person name="Normand P."/>
            <person name="Dreyfus B."/>
            <person name="Pignol D."/>
            <person name="Stacey G."/>
            <person name="Emerich D."/>
            <person name="Vermeglio A."/>
            <person name="Medigue C."/>
            <person name="Sadowsky M."/>
        </authorList>
    </citation>
    <scope>NUCLEOTIDE SEQUENCE [LARGE SCALE GENOMIC DNA]</scope>
    <source>
        <strain>ORS 278</strain>
    </source>
</reference>
<dbReference type="EC" id="1.1.1.86" evidence="1"/>
<dbReference type="EMBL" id="CU234118">
    <property type="protein sequence ID" value="CAL79232.1"/>
    <property type="molecule type" value="Genomic_DNA"/>
</dbReference>
<dbReference type="RefSeq" id="WP_012029143.1">
    <property type="nucleotide sequence ID" value="NC_009445.1"/>
</dbReference>
<dbReference type="SMR" id="A4YZA6"/>
<dbReference type="STRING" id="114615.BRADO5559"/>
<dbReference type="KEGG" id="bra:BRADO5559"/>
<dbReference type="eggNOG" id="COG0059">
    <property type="taxonomic scope" value="Bacteria"/>
</dbReference>
<dbReference type="HOGENOM" id="CLU_033821_0_1_5"/>
<dbReference type="OrthoDB" id="9804088at2"/>
<dbReference type="UniPathway" id="UPA00047">
    <property type="reaction ID" value="UER00056"/>
</dbReference>
<dbReference type="UniPathway" id="UPA00049">
    <property type="reaction ID" value="UER00060"/>
</dbReference>
<dbReference type="Proteomes" id="UP000001994">
    <property type="component" value="Chromosome"/>
</dbReference>
<dbReference type="GO" id="GO:0005829">
    <property type="term" value="C:cytosol"/>
    <property type="evidence" value="ECO:0007669"/>
    <property type="project" value="TreeGrafter"/>
</dbReference>
<dbReference type="GO" id="GO:0004455">
    <property type="term" value="F:ketol-acid reductoisomerase activity"/>
    <property type="evidence" value="ECO:0007669"/>
    <property type="project" value="UniProtKB-UniRule"/>
</dbReference>
<dbReference type="GO" id="GO:0000287">
    <property type="term" value="F:magnesium ion binding"/>
    <property type="evidence" value="ECO:0007669"/>
    <property type="project" value="UniProtKB-UniRule"/>
</dbReference>
<dbReference type="GO" id="GO:0050661">
    <property type="term" value="F:NADP binding"/>
    <property type="evidence" value="ECO:0007669"/>
    <property type="project" value="InterPro"/>
</dbReference>
<dbReference type="GO" id="GO:0009097">
    <property type="term" value="P:isoleucine biosynthetic process"/>
    <property type="evidence" value="ECO:0007669"/>
    <property type="project" value="UniProtKB-UniRule"/>
</dbReference>
<dbReference type="GO" id="GO:0009099">
    <property type="term" value="P:L-valine biosynthetic process"/>
    <property type="evidence" value="ECO:0007669"/>
    <property type="project" value="UniProtKB-UniRule"/>
</dbReference>
<dbReference type="FunFam" id="3.40.50.720:FF:000023">
    <property type="entry name" value="Ketol-acid reductoisomerase (NADP(+))"/>
    <property type="match status" value="1"/>
</dbReference>
<dbReference type="Gene3D" id="6.10.240.10">
    <property type="match status" value="1"/>
</dbReference>
<dbReference type="Gene3D" id="3.40.50.720">
    <property type="entry name" value="NAD(P)-binding Rossmann-like Domain"/>
    <property type="match status" value="1"/>
</dbReference>
<dbReference type="HAMAP" id="MF_00435">
    <property type="entry name" value="IlvC"/>
    <property type="match status" value="1"/>
</dbReference>
<dbReference type="InterPro" id="IPR008927">
    <property type="entry name" value="6-PGluconate_DH-like_C_sf"/>
</dbReference>
<dbReference type="InterPro" id="IPR013023">
    <property type="entry name" value="KARI"/>
</dbReference>
<dbReference type="InterPro" id="IPR000506">
    <property type="entry name" value="KARI_C"/>
</dbReference>
<dbReference type="InterPro" id="IPR013116">
    <property type="entry name" value="KARI_N"/>
</dbReference>
<dbReference type="InterPro" id="IPR014359">
    <property type="entry name" value="KARI_prok"/>
</dbReference>
<dbReference type="InterPro" id="IPR036291">
    <property type="entry name" value="NAD(P)-bd_dom_sf"/>
</dbReference>
<dbReference type="NCBIfam" id="TIGR00465">
    <property type="entry name" value="ilvC"/>
    <property type="match status" value="1"/>
</dbReference>
<dbReference type="NCBIfam" id="NF004017">
    <property type="entry name" value="PRK05479.1"/>
    <property type="match status" value="1"/>
</dbReference>
<dbReference type="NCBIfam" id="NF009940">
    <property type="entry name" value="PRK13403.1"/>
    <property type="match status" value="1"/>
</dbReference>
<dbReference type="PANTHER" id="PTHR21371">
    <property type="entry name" value="KETOL-ACID REDUCTOISOMERASE, MITOCHONDRIAL"/>
    <property type="match status" value="1"/>
</dbReference>
<dbReference type="PANTHER" id="PTHR21371:SF1">
    <property type="entry name" value="KETOL-ACID REDUCTOISOMERASE, MITOCHONDRIAL"/>
    <property type="match status" value="1"/>
</dbReference>
<dbReference type="Pfam" id="PF01450">
    <property type="entry name" value="KARI_C"/>
    <property type="match status" value="1"/>
</dbReference>
<dbReference type="Pfam" id="PF07991">
    <property type="entry name" value="KARI_N"/>
    <property type="match status" value="1"/>
</dbReference>
<dbReference type="PIRSF" id="PIRSF000116">
    <property type="entry name" value="IlvC_gammaproteo"/>
    <property type="match status" value="1"/>
</dbReference>
<dbReference type="SUPFAM" id="SSF48179">
    <property type="entry name" value="6-phosphogluconate dehydrogenase C-terminal domain-like"/>
    <property type="match status" value="1"/>
</dbReference>
<dbReference type="SUPFAM" id="SSF51735">
    <property type="entry name" value="NAD(P)-binding Rossmann-fold domains"/>
    <property type="match status" value="1"/>
</dbReference>
<dbReference type="PROSITE" id="PS51851">
    <property type="entry name" value="KARI_C"/>
    <property type="match status" value="1"/>
</dbReference>
<dbReference type="PROSITE" id="PS51850">
    <property type="entry name" value="KARI_N"/>
    <property type="match status" value="1"/>
</dbReference>
<evidence type="ECO:0000255" key="1">
    <source>
        <dbReference type="HAMAP-Rule" id="MF_00435"/>
    </source>
</evidence>
<evidence type="ECO:0000255" key="2">
    <source>
        <dbReference type="PROSITE-ProRule" id="PRU01197"/>
    </source>
</evidence>
<evidence type="ECO:0000255" key="3">
    <source>
        <dbReference type="PROSITE-ProRule" id="PRU01198"/>
    </source>
</evidence>
<comment type="function">
    <text evidence="1">Involved in the biosynthesis of branched-chain amino acids (BCAA). Catalyzes an alkyl-migration followed by a ketol-acid reduction of (S)-2-acetolactate (S2AL) to yield (R)-2,3-dihydroxy-isovalerate. In the isomerase reaction, S2AL is rearranged via a Mg-dependent methyl migration to produce 3-hydroxy-3-methyl-2-ketobutyrate (HMKB). In the reductase reaction, this 2-ketoacid undergoes a metal-dependent reduction by NADPH to yield (R)-2,3-dihydroxy-isovalerate.</text>
</comment>
<comment type="catalytic activity">
    <reaction evidence="1">
        <text>(2R)-2,3-dihydroxy-3-methylbutanoate + NADP(+) = (2S)-2-acetolactate + NADPH + H(+)</text>
        <dbReference type="Rhea" id="RHEA:22068"/>
        <dbReference type="ChEBI" id="CHEBI:15378"/>
        <dbReference type="ChEBI" id="CHEBI:49072"/>
        <dbReference type="ChEBI" id="CHEBI:57783"/>
        <dbReference type="ChEBI" id="CHEBI:58349"/>
        <dbReference type="ChEBI" id="CHEBI:58476"/>
        <dbReference type="EC" id="1.1.1.86"/>
    </reaction>
</comment>
<comment type="catalytic activity">
    <reaction evidence="1">
        <text>(2R,3R)-2,3-dihydroxy-3-methylpentanoate + NADP(+) = (S)-2-ethyl-2-hydroxy-3-oxobutanoate + NADPH + H(+)</text>
        <dbReference type="Rhea" id="RHEA:13493"/>
        <dbReference type="ChEBI" id="CHEBI:15378"/>
        <dbReference type="ChEBI" id="CHEBI:49256"/>
        <dbReference type="ChEBI" id="CHEBI:49258"/>
        <dbReference type="ChEBI" id="CHEBI:57783"/>
        <dbReference type="ChEBI" id="CHEBI:58349"/>
        <dbReference type="EC" id="1.1.1.86"/>
    </reaction>
</comment>
<comment type="cofactor">
    <cofactor evidence="1">
        <name>Mg(2+)</name>
        <dbReference type="ChEBI" id="CHEBI:18420"/>
    </cofactor>
    <text evidence="1">Binds 2 magnesium ions per subunit.</text>
</comment>
<comment type="pathway">
    <text evidence="1">Amino-acid biosynthesis; L-isoleucine biosynthesis; L-isoleucine from 2-oxobutanoate: step 2/4.</text>
</comment>
<comment type="pathway">
    <text evidence="1">Amino-acid biosynthesis; L-valine biosynthesis; L-valine from pyruvate: step 2/4.</text>
</comment>
<comment type="similarity">
    <text evidence="1">Belongs to the ketol-acid reductoisomerase family.</text>
</comment>
<accession>A4YZA6</accession>
<organism>
    <name type="scientific">Bradyrhizobium sp. (strain ORS 278)</name>
    <dbReference type="NCBI Taxonomy" id="114615"/>
    <lineage>
        <taxon>Bacteria</taxon>
        <taxon>Pseudomonadati</taxon>
        <taxon>Pseudomonadota</taxon>
        <taxon>Alphaproteobacteria</taxon>
        <taxon>Hyphomicrobiales</taxon>
        <taxon>Nitrobacteraceae</taxon>
        <taxon>Bradyrhizobium</taxon>
    </lineage>
</organism>
<gene>
    <name evidence="1" type="primary">ilvC</name>
    <name type="ordered locus">BRADO5559</name>
</gene>
<feature type="chain" id="PRO_1000050482" description="Ketol-acid reductoisomerase (NADP(+))">
    <location>
        <begin position="1"/>
        <end position="339"/>
    </location>
</feature>
<feature type="domain" description="KARI N-terminal Rossmann" evidence="2">
    <location>
        <begin position="1"/>
        <end position="182"/>
    </location>
</feature>
<feature type="domain" description="KARI C-terminal knotted" evidence="3">
    <location>
        <begin position="183"/>
        <end position="328"/>
    </location>
</feature>
<feature type="active site" evidence="1">
    <location>
        <position position="108"/>
    </location>
</feature>
<feature type="binding site" evidence="1">
    <location>
        <begin position="24"/>
        <end position="27"/>
    </location>
    <ligand>
        <name>NADP(+)</name>
        <dbReference type="ChEBI" id="CHEBI:58349"/>
    </ligand>
</feature>
<feature type="binding site" evidence="1">
    <location>
        <position position="48"/>
    </location>
    <ligand>
        <name>NADP(+)</name>
        <dbReference type="ChEBI" id="CHEBI:58349"/>
    </ligand>
</feature>
<feature type="binding site" evidence="1">
    <location>
        <position position="51"/>
    </location>
    <ligand>
        <name>NADP(+)</name>
        <dbReference type="ChEBI" id="CHEBI:58349"/>
    </ligand>
</feature>
<feature type="binding site" evidence="1">
    <location>
        <position position="53"/>
    </location>
    <ligand>
        <name>NADP(+)</name>
        <dbReference type="ChEBI" id="CHEBI:58349"/>
    </ligand>
</feature>
<feature type="binding site" evidence="1">
    <location>
        <begin position="83"/>
        <end position="86"/>
    </location>
    <ligand>
        <name>NADP(+)</name>
        <dbReference type="ChEBI" id="CHEBI:58349"/>
    </ligand>
</feature>
<feature type="binding site" evidence="1">
    <location>
        <position position="134"/>
    </location>
    <ligand>
        <name>NADP(+)</name>
        <dbReference type="ChEBI" id="CHEBI:58349"/>
    </ligand>
</feature>
<feature type="binding site" evidence="1">
    <location>
        <position position="191"/>
    </location>
    <ligand>
        <name>Mg(2+)</name>
        <dbReference type="ChEBI" id="CHEBI:18420"/>
        <label>1</label>
    </ligand>
</feature>
<feature type="binding site" evidence="1">
    <location>
        <position position="191"/>
    </location>
    <ligand>
        <name>Mg(2+)</name>
        <dbReference type="ChEBI" id="CHEBI:18420"/>
        <label>2</label>
    </ligand>
</feature>
<feature type="binding site" evidence="1">
    <location>
        <position position="195"/>
    </location>
    <ligand>
        <name>Mg(2+)</name>
        <dbReference type="ChEBI" id="CHEBI:18420"/>
        <label>1</label>
    </ligand>
</feature>
<feature type="binding site" evidence="1">
    <location>
        <position position="227"/>
    </location>
    <ligand>
        <name>Mg(2+)</name>
        <dbReference type="ChEBI" id="CHEBI:18420"/>
        <label>2</label>
    </ligand>
</feature>
<feature type="binding site" evidence="1">
    <location>
        <position position="231"/>
    </location>
    <ligand>
        <name>Mg(2+)</name>
        <dbReference type="ChEBI" id="CHEBI:18420"/>
        <label>2</label>
    </ligand>
</feature>
<feature type="binding site" evidence="1">
    <location>
        <position position="252"/>
    </location>
    <ligand>
        <name>substrate</name>
    </ligand>
</feature>
<proteinExistence type="inferred from homology"/>
<keyword id="KW-0028">Amino-acid biosynthesis</keyword>
<keyword id="KW-0100">Branched-chain amino acid biosynthesis</keyword>
<keyword id="KW-0460">Magnesium</keyword>
<keyword id="KW-0479">Metal-binding</keyword>
<keyword id="KW-0521">NADP</keyword>
<keyword id="KW-0560">Oxidoreductase</keyword>
<keyword id="KW-1185">Reference proteome</keyword>